<proteinExistence type="evidence at protein level"/>
<keyword id="KW-0963">Cytoplasm</keyword>
<keyword id="KW-0539">Nucleus</keyword>
<keyword id="KW-0649">Protein kinase inhibitor</keyword>
<keyword id="KW-1267">Proteomics identification</keyword>
<keyword id="KW-1185">Reference proteome</keyword>
<keyword id="KW-0770">Synapse</keyword>
<gene>
    <name type="primary">CAMK2N2</name>
</gene>
<evidence type="ECO:0000250" key="1"/>
<evidence type="ECO:0000250" key="2">
    <source>
        <dbReference type="UniProtKB" id="Q78WH7"/>
    </source>
</evidence>
<evidence type="ECO:0000250" key="3">
    <source>
        <dbReference type="UniProtKB" id="Q9Z2N6"/>
    </source>
</evidence>
<evidence type="ECO:0000256" key="4">
    <source>
        <dbReference type="SAM" id="MobiDB-lite"/>
    </source>
</evidence>
<evidence type="ECO:0000269" key="5">
    <source>
    </source>
</evidence>
<evidence type="ECO:0000305" key="6"/>
<organism>
    <name type="scientific">Homo sapiens</name>
    <name type="common">Human</name>
    <dbReference type="NCBI Taxonomy" id="9606"/>
    <lineage>
        <taxon>Eukaryota</taxon>
        <taxon>Metazoa</taxon>
        <taxon>Chordata</taxon>
        <taxon>Craniata</taxon>
        <taxon>Vertebrata</taxon>
        <taxon>Euteleostomi</taxon>
        <taxon>Mammalia</taxon>
        <taxon>Eutheria</taxon>
        <taxon>Euarchontoglires</taxon>
        <taxon>Primates</taxon>
        <taxon>Haplorrhini</taxon>
        <taxon>Catarrhini</taxon>
        <taxon>Hominidae</taxon>
        <taxon>Homo</taxon>
    </lineage>
</organism>
<name>CK2N2_HUMAN</name>
<feature type="chain" id="PRO_0000327266" description="Calcium/calmodulin-dependent protein kinase II inhibitor 2">
    <location>
        <begin position="1"/>
        <end position="79"/>
    </location>
</feature>
<feature type="region of interest" description="Disordered" evidence="4">
    <location>
        <begin position="1"/>
        <end position="21"/>
    </location>
</feature>
<feature type="region of interest" description="Inhibitory domain" evidence="1">
    <location>
        <begin position="43"/>
        <end position="69"/>
    </location>
</feature>
<accession>Q96S95</accession>
<sequence length="79" mass="8658">MSEILPYSEDKMGRFGADPEGSDLSFSCRLQDTNSFFAGNQAKRPPKLGQIGRAKRVVIEDDRIDDVLKGMGEKPPSGV</sequence>
<dbReference type="EMBL" id="AY037149">
    <property type="protein sequence ID" value="AAK67630.1"/>
    <property type="molecule type" value="mRNA"/>
</dbReference>
<dbReference type="EMBL" id="CH471052">
    <property type="protein sequence ID" value="EAW78280.1"/>
    <property type="molecule type" value="Genomic_DNA"/>
</dbReference>
<dbReference type="EMBL" id="BC105077">
    <property type="protein sequence ID" value="AAI05078.1"/>
    <property type="molecule type" value="mRNA"/>
</dbReference>
<dbReference type="EMBL" id="BC105079">
    <property type="protein sequence ID" value="AAI05080.1"/>
    <property type="molecule type" value="mRNA"/>
</dbReference>
<dbReference type="CCDS" id="CCDS3257.1"/>
<dbReference type="RefSeq" id="NP_150284.1">
    <property type="nucleotide sequence ID" value="NM_033259.3"/>
</dbReference>
<dbReference type="BioGRID" id="125100">
    <property type="interactions" value="3"/>
</dbReference>
<dbReference type="FunCoup" id="Q96S95">
    <property type="interactions" value="127"/>
</dbReference>
<dbReference type="IntAct" id="Q96S95">
    <property type="interactions" value="2"/>
</dbReference>
<dbReference type="STRING" id="9606.ENSP00000296238"/>
<dbReference type="GlyGen" id="Q96S95">
    <property type="glycosylation" value="1 site, 1 O-linked glycan (1 site)"/>
</dbReference>
<dbReference type="iPTMnet" id="Q96S95"/>
<dbReference type="PhosphoSitePlus" id="Q96S95"/>
<dbReference type="BioMuta" id="CAMK2N2"/>
<dbReference type="MassIVE" id="Q96S95"/>
<dbReference type="PaxDb" id="9606-ENSP00000296238"/>
<dbReference type="PeptideAtlas" id="Q96S95"/>
<dbReference type="ProteomicsDB" id="78090"/>
<dbReference type="Antibodypedia" id="33806">
    <property type="antibodies" value="64 antibodies from 17 providers"/>
</dbReference>
<dbReference type="DNASU" id="94032"/>
<dbReference type="Ensembl" id="ENST00000296238.4">
    <property type="protein sequence ID" value="ENSP00000296238.3"/>
    <property type="gene ID" value="ENSG00000163888.4"/>
</dbReference>
<dbReference type="GeneID" id="94032"/>
<dbReference type="KEGG" id="hsa:94032"/>
<dbReference type="MANE-Select" id="ENST00000296238.4">
    <property type="protein sequence ID" value="ENSP00000296238.3"/>
    <property type="RefSeq nucleotide sequence ID" value="NM_033259.3"/>
    <property type="RefSeq protein sequence ID" value="NP_150284.1"/>
</dbReference>
<dbReference type="UCSC" id="uc003fnj.2">
    <property type="organism name" value="human"/>
</dbReference>
<dbReference type="AGR" id="HGNC:24197"/>
<dbReference type="CTD" id="94032"/>
<dbReference type="DisGeNET" id="94032"/>
<dbReference type="GeneCards" id="CAMK2N2"/>
<dbReference type="HGNC" id="HGNC:24197">
    <property type="gene designation" value="CAMK2N2"/>
</dbReference>
<dbReference type="HPA" id="ENSG00000163888">
    <property type="expression patterns" value="Tissue enhanced (brain, pancreas, pituitary gland)"/>
</dbReference>
<dbReference type="MIM" id="608721">
    <property type="type" value="gene"/>
</dbReference>
<dbReference type="neXtProt" id="NX_Q96S95"/>
<dbReference type="OpenTargets" id="ENSG00000163888"/>
<dbReference type="PharmGKB" id="PA142672210"/>
<dbReference type="VEuPathDB" id="HostDB:ENSG00000163888"/>
<dbReference type="eggNOG" id="ENOG502S4FG">
    <property type="taxonomic scope" value="Eukaryota"/>
</dbReference>
<dbReference type="GeneTree" id="ENSGT00390000004940"/>
<dbReference type="HOGENOM" id="CLU_197183_0_0_1"/>
<dbReference type="InParanoid" id="Q96S95"/>
<dbReference type="OMA" id="MSEIMPY"/>
<dbReference type="OrthoDB" id="9922824at2759"/>
<dbReference type="PAN-GO" id="Q96S95">
    <property type="GO annotations" value="3 GO annotations based on evolutionary models"/>
</dbReference>
<dbReference type="PhylomeDB" id="Q96S95"/>
<dbReference type="TreeFam" id="TF333175"/>
<dbReference type="PathwayCommons" id="Q96S95"/>
<dbReference type="SignaLink" id="Q96S95"/>
<dbReference type="BioGRID-ORCS" id="94032">
    <property type="hits" value="12 hits in 1150 CRISPR screens"/>
</dbReference>
<dbReference type="GenomeRNAi" id="94032"/>
<dbReference type="Pharos" id="Q96S95">
    <property type="development level" value="Tbio"/>
</dbReference>
<dbReference type="PRO" id="PR:Q96S95"/>
<dbReference type="Proteomes" id="UP000005640">
    <property type="component" value="Chromosome 3"/>
</dbReference>
<dbReference type="RNAct" id="Q96S95">
    <property type="molecule type" value="protein"/>
</dbReference>
<dbReference type="Bgee" id="ENSG00000163888">
    <property type="expression patterns" value="Expressed in right hemisphere of cerebellum and 109 other cell types or tissues"/>
</dbReference>
<dbReference type="GO" id="GO:0005829">
    <property type="term" value="C:cytosol"/>
    <property type="evidence" value="ECO:0007669"/>
    <property type="project" value="UniProtKB-SubCell"/>
</dbReference>
<dbReference type="GO" id="GO:0005634">
    <property type="term" value="C:nucleus"/>
    <property type="evidence" value="ECO:0007669"/>
    <property type="project" value="UniProtKB-SubCell"/>
</dbReference>
<dbReference type="GO" id="GO:0045202">
    <property type="term" value="C:synapse"/>
    <property type="evidence" value="ECO:0000250"/>
    <property type="project" value="UniProtKB"/>
</dbReference>
<dbReference type="GO" id="GO:0008427">
    <property type="term" value="F:calcium-dependent protein kinase inhibitor activity"/>
    <property type="evidence" value="ECO:0000318"/>
    <property type="project" value="GO_Central"/>
</dbReference>
<dbReference type="GO" id="GO:0019901">
    <property type="term" value="F:protein kinase binding"/>
    <property type="evidence" value="ECO:0000318"/>
    <property type="project" value="GO_Central"/>
</dbReference>
<dbReference type="InterPro" id="IPR026779">
    <property type="entry name" value="Camk2n"/>
</dbReference>
<dbReference type="PANTHER" id="PTHR31007">
    <property type="entry name" value="CALCIUM/CALMODULIN-DEPENDENT PROTEIN KINASE II INHIBITOR 2"/>
    <property type="match status" value="1"/>
</dbReference>
<dbReference type="PANTHER" id="PTHR31007:SF1">
    <property type="entry name" value="CALCIUM_CALMODULIN-DEPENDENT PROTEIN KINASE II INHIBITOR 2"/>
    <property type="match status" value="1"/>
</dbReference>
<dbReference type="Pfam" id="PF15170">
    <property type="entry name" value="CaM-KIIN"/>
    <property type="match status" value="1"/>
</dbReference>
<reference key="1">
    <citation type="journal article" date="2001" name="Biochem. Biophys. Res. Commun.">
        <title>Molecular cloning and characterization of a novel calcium/calmodulin-dependent protein kinase II inhibitor from human dendritic cells.</title>
        <authorList>
            <person name="Zhang J."/>
            <person name="Li N."/>
            <person name="Yu J."/>
            <person name="Zhang W."/>
            <person name="Cao X."/>
        </authorList>
    </citation>
    <scope>NUCLEOTIDE SEQUENCE [MRNA]</scope>
    <scope>FUNCTION</scope>
    <scope>TISSUE SPECIFICITY</scope>
    <source>
        <tissue>Dendritic cell</tissue>
    </source>
</reference>
<reference key="2">
    <citation type="submission" date="2005-09" db="EMBL/GenBank/DDBJ databases">
        <authorList>
            <person name="Mural R.J."/>
            <person name="Istrail S."/>
            <person name="Sutton G.G."/>
            <person name="Florea L."/>
            <person name="Halpern A.L."/>
            <person name="Mobarry C.M."/>
            <person name="Lippert R."/>
            <person name="Walenz B."/>
            <person name="Shatkay H."/>
            <person name="Dew I."/>
            <person name="Miller J.R."/>
            <person name="Flanigan M.J."/>
            <person name="Edwards N.J."/>
            <person name="Bolanos R."/>
            <person name="Fasulo D."/>
            <person name="Halldorsson B.V."/>
            <person name="Hannenhalli S."/>
            <person name="Turner R."/>
            <person name="Yooseph S."/>
            <person name="Lu F."/>
            <person name="Nusskern D.R."/>
            <person name="Shue B.C."/>
            <person name="Zheng X.H."/>
            <person name="Zhong F."/>
            <person name="Delcher A.L."/>
            <person name="Huson D.H."/>
            <person name="Kravitz S.A."/>
            <person name="Mouchard L."/>
            <person name="Reinert K."/>
            <person name="Remington K.A."/>
            <person name="Clark A.G."/>
            <person name="Waterman M.S."/>
            <person name="Eichler E.E."/>
            <person name="Adams M.D."/>
            <person name="Hunkapiller M.W."/>
            <person name="Myers E.W."/>
            <person name="Venter J.C."/>
        </authorList>
    </citation>
    <scope>NUCLEOTIDE SEQUENCE [LARGE SCALE GENOMIC DNA]</scope>
</reference>
<reference key="3">
    <citation type="journal article" date="2004" name="Genome Res.">
        <title>The status, quality, and expansion of the NIH full-length cDNA project: the Mammalian Gene Collection (MGC).</title>
        <authorList>
            <consortium name="The MGC Project Team"/>
        </authorList>
    </citation>
    <scope>NUCLEOTIDE SEQUENCE [LARGE SCALE MRNA]</scope>
    <source>
        <tissue>Brain</tissue>
    </source>
</reference>
<comment type="function">
    <text evidence="3 5">Potent and specific cellular inhibitor of CaM-kinase II (CAMK2) (PubMed:11444830). Traps Ca(2+)/calmodulin on CAMK2 (By similarity).</text>
</comment>
<comment type="subunit">
    <text evidence="3">Interacts with CAMK2A and CAMK2B in the presence of Ca(2+)/calmodulin or after autophosphorylation.</text>
</comment>
<comment type="subcellular location">
    <subcellularLocation>
        <location evidence="3">Nucleus</location>
    </subcellularLocation>
    <subcellularLocation>
        <location evidence="3">Cytoplasm</location>
        <location evidence="3">Cytosol</location>
    </subcellularLocation>
    <subcellularLocation>
        <location evidence="2">Synapse</location>
    </subcellularLocation>
    <text evidence="3">Excluded from nucleus when coexpressed with activated CAMK2.</text>
</comment>
<comment type="tissue specificity">
    <text evidence="5">Highly Expressed in keyhole limpet hemocyanin-stimulated dendritic cell (DC) and weakly expressed in unstimulated mature and immature DC (PubMed:11444830). Highly expressed in kidney and liver (PubMed:11444830). Moderately expressed in heart, skeletal muscle, and placenta (PubMed:11444830). Weakly expressed in the small intestine (PubMed:11444830).</text>
</comment>
<comment type="similarity">
    <text evidence="6">Belongs to the CAMK2N family.</text>
</comment>
<protein>
    <recommendedName>
        <fullName>Calcium/calmodulin-dependent protein kinase II inhibitor 2</fullName>
    </recommendedName>
    <alternativeName>
        <fullName>CaM-KII inhibitory protein</fullName>
        <shortName>CaM-KIIN</shortName>
    </alternativeName>
</protein>